<organism>
    <name type="scientific">Salmonella choleraesuis (strain SC-B67)</name>
    <dbReference type="NCBI Taxonomy" id="321314"/>
    <lineage>
        <taxon>Bacteria</taxon>
        <taxon>Pseudomonadati</taxon>
        <taxon>Pseudomonadota</taxon>
        <taxon>Gammaproteobacteria</taxon>
        <taxon>Enterobacterales</taxon>
        <taxon>Enterobacteriaceae</taxon>
        <taxon>Salmonella</taxon>
    </lineage>
</organism>
<keyword id="KW-0488">Methylation</keyword>
<keyword id="KW-0687">Ribonucleoprotein</keyword>
<keyword id="KW-0689">Ribosomal protein</keyword>
<keyword id="KW-0694">RNA-binding</keyword>
<keyword id="KW-0699">rRNA-binding</keyword>
<dbReference type="EMBL" id="AE017220">
    <property type="protein sequence ID" value="AAX67939.1"/>
    <property type="molecule type" value="Genomic_DNA"/>
</dbReference>
<dbReference type="RefSeq" id="WP_001085926.1">
    <property type="nucleotide sequence ID" value="NC_006905.1"/>
</dbReference>
<dbReference type="SMR" id="Q57H73"/>
<dbReference type="GeneID" id="93777911"/>
<dbReference type="KEGG" id="sec:SCH_4033"/>
<dbReference type="HOGENOM" id="CLU_074237_2_0_6"/>
<dbReference type="Proteomes" id="UP000000538">
    <property type="component" value="Chromosome"/>
</dbReference>
<dbReference type="GO" id="GO:0022625">
    <property type="term" value="C:cytosolic large ribosomal subunit"/>
    <property type="evidence" value="ECO:0007669"/>
    <property type="project" value="TreeGrafter"/>
</dbReference>
<dbReference type="GO" id="GO:0070180">
    <property type="term" value="F:large ribosomal subunit rRNA binding"/>
    <property type="evidence" value="ECO:0007669"/>
    <property type="project" value="UniProtKB-UniRule"/>
</dbReference>
<dbReference type="GO" id="GO:0003735">
    <property type="term" value="F:structural constituent of ribosome"/>
    <property type="evidence" value="ECO:0007669"/>
    <property type="project" value="InterPro"/>
</dbReference>
<dbReference type="GO" id="GO:0006412">
    <property type="term" value="P:translation"/>
    <property type="evidence" value="ECO:0007669"/>
    <property type="project" value="UniProtKB-UniRule"/>
</dbReference>
<dbReference type="CDD" id="cd00349">
    <property type="entry name" value="Ribosomal_L11"/>
    <property type="match status" value="1"/>
</dbReference>
<dbReference type="FunFam" id="1.10.10.250:FF:000001">
    <property type="entry name" value="50S ribosomal protein L11"/>
    <property type="match status" value="1"/>
</dbReference>
<dbReference type="FunFam" id="3.30.1550.10:FF:000001">
    <property type="entry name" value="50S ribosomal protein L11"/>
    <property type="match status" value="1"/>
</dbReference>
<dbReference type="Gene3D" id="1.10.10.250">
    <property type="entry name" value="Ribosomal protein L11, C-terminal domain"/>
    <property type="match status" value="1"/>
</dbReference>
<dbReference type="Gene3D" id="3.30.1550.10">
    <property type="entry name" value="Ribosomal protein L11/L12, N-terminal domain"/>
    <property type="match status" value="1"/>
</dbReference>
<dbReference type="HAMAP" id="MF_00736">
    <property type="entry name" value="Ribosomal_uL11"/>
    <property type="match status" value="1"/>
</dbReference>
<dbReference type="InterPro" id="IPR000911">
    <property type="entry name" value="Ribosomal_uL11"/>
</dbReference>
<dbReference type="InterPro" id="IPR006519">
    <property type="entry name" value="Ribosomal_uL11_bac-typ"/>
</dbReference>
<dbReference type="InterPro" id="IPR020783">
    <property type="entry name" value="Ribosomal_uL11_C"/>
</dbReference>
<dbReference type="InterPro" id="IPR036769">
    <property type="entry name" value="Ribosomal_uL11_C_sf"/>
</dbReference>
<dbReference type="InterPro" id="IPR020785">
    <property type="entry name" value="Ribosomal_uL11_CS"/>
</dbReference>
<dbReference type="InterPro" id="IPR020784">
    <property type="entry name" value="Ribosomal_uL11_N"/>
</dbReference>
<dbReference type="InterPro" id="IPR036796">
    <property type="entry name" value="Ribosomal_uL11_N_sf"/>
</dbReference>
<dbReference type="NCBIfam" id="TIGR01632">
    <property type="entry name" value="L11_bact"/>
    <property type="match status" value="1"/>
</dbReference>
<dbReference type="PANTHER" id="PTHR11661">
    <property type="entry name" value="60S RIBOSOMAL PROTEIN L12"/>
    <property type="match status" value="1"/>
</dbReference>
<dbReference type="PANTHER" id="PTHR11661:SF1">
    <property type="entry name" value="LARGE RIBOSOMAL SUBUNIT PROTEIN UL11M"/>
    <property type="match status" value="1"/>
</dbReference>
<dbReference type="Pfam" id="PF00298">
    <property type="entry name" value="Ribosomal_L11"/>
    <property type="match status" value="1"/>
</dbReference>
<dbReference type="Pfam" id="PF03946">
    <property type="entry name" value="Ribosomal_L11_N"/>
    <property type="match status" value="1"/>
</dbReference>
<dbReference type="SMART" id="SM00649">
    <property type="entry name" value="RL11"/>
    <property type="match status" value="1"/>
</dbReference>
<dbReference type="SUPFAM" id="SSF54747">
    <property type="entry name" value="Ribosomal L11/L12e N-terminal domain"/>
    <property type="match status" value="1"/>
</dbReference>
<dbReference type="SUPFAM" id="SSF46906">
    <property type="entry name" value="Ribosomal protein L11, C-terminal domain"/>
    <property type="match status" value="1"/>
</dbReference>
<dbReference type="PROSITE" id="PS00359">
    <property type="entry name" value="RIBOSOMAL_L11"/>
    <property type="match status" value="1"/>
</dbReference>
<sequence>MAKKVQAYVKLQVAAGMANPSPPVGPALGQQGVNIMEFCKAFNAKTDSIEKGLPIPVVITVYADRSFTFVTKTPPAAVLLKKAAGIKSGSGKPNKDKVGKISRAQLQEIAQTKAADMTGADIEAMTRSIEGTARSMGLVVED</sequence>
<protein>
    <recommendedName>
        <fullName evidence="2">Large ribosomal subunit protein uL11</fullName>
    </recommendedName>
    <alternativeName>
        <fullName evidence="3">50S ribosomal protein L11</fullName>
    </alternativeName>
</protein>
<gene>
    <name evidence="2" type="primary">rplK</name>
    <name type="ordered locus">SCH_4033</name>
</gene>
<proteinExistence type="inferred from homology"/>
<comment type="function">
    <text evidence="2">Forms part of the ribosomal stalk which helps the ribosome interact with GTP-bound translation factors.</text>
</comment>
<comment type="subunit">
    <text evidence="2">Part of the ribosomal stalk of the 50S ribosomal subunit. Interacts with L10 and the large rRNA to form the base of the stalk. L10 forms an elongated spine to which L12 dimers bind in a sequential fashion forming a multimeric L10(L12)X complex.</text>
</comment>
<comment type="PTM">
    <text evidence="2">One or more lysine residues are methylated.</text>
</comment>
<comment type="similarity">
    <text evidence="2">Belongs to the universal ribosomal protein uL11 family.</text>
</comment>
<accession>Q57H73</accession>
<evidence type="ECO:0000250" key="1"/>
<evidence type="ECO:0000255" key="2">
    <source>
        <dbReference type="HAMAP-Rule" id="MF_00736"/>
    </source>
</evidence>
<evidence type="ECO:0000305" key="3"/>
<reference key="1">
    <citation type="journal article" date="2005" name="Nucleic Acids Res.">
        <title>The genome sequence of Salmonella enterica serovar Choleraesuis, a highly invasive and resistant zoonotic pathogen.</title>
        <authorList>
            <person name="Chiu C.-H."/>
            <person name="Tang P."/>
            <person name="Chu C."/>
            <person name="Hu S."/>
            <person name="Bao Q."/>
            <person name="Yu J."/>
            <person name="Chou Y.-Y."/>
            <person name="Wang H.-S."/>
            <person name="Lee Y.-S."/>
        </authorList>
    </citation>
    <scope>NUCLEOTIDE SEQUENCE [LARGE SCALE GENOMIC DNA]</scope>
    <source>
        <strain>SC-B67</strain>
    </source>
</reference>
<name>RL11_SALCH</name>
<feature type="initiator methionine" description="Removed" evidence="1">
    <location>
        <position position="1"/>
    </location>
</feature>
<feature type="chain" id="PRO_0000258209" description="Large ribosomal subunit protein uL11">
    <location>
        <begin position="2"/>
        <end position="142"/>
    </location>
</feature>